<name>YAEP_SALPB</name>
<gene>
    <name evidence="1" type="primary">yaeP</name>
    <name type="ordered locus">SPAB_00304</name>
</gene>
<evidence type="ECO:0000255" key="1">
    <source>
        <dbReference type="HAMAP-Rule" id="MF_01064"/>
    </source>
</evidence>
<proteinExistence type="inferred from homology"/>
<reference key="1">
    <citation type="submission" date="2007-11" db="EMBL/GenBank/DDBJ databases">
        <authorList>
            <consortium name="The Salmonella enterica serovar Paratyphi B Genome Sequencing Project"/>
            <person name="McClelland M."/>
            <person name="Sanderson E.K."/>
            <person name="Porwollik S."/>
            <person name="Spieth J."/>
            <person name="Clifton W.S."/>
            <person name="Fulton R."/>
            <person name="Cordes M."/>
            <person name="Wollam A."/>
            <person name="Shah N."/>
            <person name="Pepin K."/>
            <person name="Bhonagiri V."/>
            <person name="Nash W."/>
            <person name="Johnson M."/>
            <person name="Thiruvilangam P."/>
            <person name="Wilson R."/>
        </authorList>
    </citation>
    <scope>NUCLEOTIDE SEQUENCE [LARGE SCALE GENOMIC DNA]</scope>
    <source>
        <strain>ATCC BAA-1250 / SPB7</strain>
    </source>
</reference>
<sequence>MEKYCELVRKRYAEIASGDLGYVPDALGCVLKVLNEVAADSALSESVREKAAYAAANLLVSDYVNE</sequence>
<accession>A9N0U3</accession>
<dbReference type="EMBL" id="CP000886">
    <property type="protein sequence ID" value="ABX65745.1"/>
    <property type="molecule type" value="Genomic_DNA"/>
</dbReference>
<dbReference type="RefSeq" id="WP_001518678.1">
    <property type="nucleotide sequence ID" value="NC_010102.1"/>
</dbReference>
<dbReference type="SMR" id="A9N0U3"/>
<dbReference type="KEGG" id="spq:SPAB_00304"/>
<dbReference type="PATRIC" id="fig|1016998.12.peg.290"/>
<dbReference type="HOGENOM" id="CLU_190008_0_0_6"/>
<dbReference type="Proteomes" id="UP000008556">
    <property type="component" value="Chromosome"/>
</dbReference>
<dbReference type="HAMAP" id="MF_01064">
    <property type="entry name" value="UPF0253"/>
    <property type="match status" value="1"/>
</dbReference>
<dbReference type="InterPro" id="IPR009624">
    <property type="entry name" value="UPF0253"/>
</dbReference>
<dbReference type="NCBIfam" id="NF003436">
    <property type="entry name" value="PRK04964.1"/>
    <property type="match status" value="1"/>
</dbReference>
<dbReference type="Pfam" id="PF06786">
    <property type="entry name" value="UPF0253"/>
    <property type="match status" value="1"/>
</dbReference>
<comment type="similarity">
    <text evidence="1">Belongs to the UPF0253 family.</text>
</comment>
<feature type="chain" id="PRO_1000084485" description="UPF0253 protein YaeP">
    <location>
        <begin position="1"/>
        <end position="66"/>
    </location>
</feature>
<protein>
    <recommendedName>
        <fullName evidence="1">UPF0253 protein YaeP</fullName>
    </recommendedName>
</protein>
<organism>
    <name type="scientific">Salmonella paratyphi B (strain ATCC BAA-1250 / SPB7)</name>
    <dbReference type="NCBI Taxonomy" id="1016998"/>
    <lineage>
        <taxon>Bacteria</taxon>
        <taxon>Pseudomonadati</taxon>
        <taxon>Pseudomonadota</taxon>
        <taxon>Gammaproteobacteria</taxon>
        <taxon>Enterobacterales</taxon>
        <taxon>Enterobacteriaceae</taxon>
        <taxon>Salmonella</taxon>
    </lineage>
</organism>